<name>GPDA_ACIBC</name>
<feature type="chain" id="PRO_1000123107" description="Glycerol-3-phosphate dehydrogenase [NAD(P)+]">
    <location>
        <begin position="1"/>
        <end position="357"/>
    </location>
</feature>
<feature type="active site" description="Proton acceptor" evidence="1">
    <location>
        <position position="207"/>
    </location>
</feature>
<feature type="binding site" evidence="1">
    <location>
        <position position="30"/>
    </location>
    <ligand>
        <name>NADPH</name>
        <dbReference type="ChEBI" id="CHEBI:57783"/>
    </ligand>
</feature>
<feature type="binding site" evidence="1">
    <location>
        <position position="31"/>
    </location>
    <ligand>
        <name>NADPH</name>
        <dbReference type="ChEBI" id="CHEBI:57783"/>
    </ligand>
</feature>
<feature type="binding site" evidence="1">
    <location>
        <position position="51"/>
    </location>
    <ligand>
        <name>NADPH</name>
        <dbReference type="ChEBI" id="CHEBI:57783"/>
    </ligand>
</feature>
<feature type="binding site" evidence="1">
    <location>
        <position position="124"/>
    </location>
    <ligand>
        <name>NADPH</name>
        <dbReference type="ChEBI" id="CHEBI:57783"/>
    </ligand>
</feature>
<feature type="binding site" evidence="1">
    <location>
        <position position="124"/>
    </location>
    <ligand>
        <name>sn-glycerol 3-phosphate</name>
        <dbReference type="ChEBI" id="CHEBI:57597"/>
    </ligand>
</feature>
<feature type="binding site" evidence="1">
    <location>
        <position position="152"/>
    </location>
    <ligand>
        <name>sn-glycerol 3-phosphate</name>
        <dbReference type="ChEBI" id="CHEBI:57597"/>
    </ligand>
</feature>
<feature type="binding site" evidence="1">
    <location>
        <position position="156"/>
    </location>
    <ligand>
        <name>NADPH</name>
        <dbReference type="ChEBI" id="CHEBI:57783"/>
    </ligand>
</feature>
<feature type="binding site" evidence="1">
    <location>
        <position position="207"/>
    </location>
    <ligand>
        <name>sn-glycerol 3-phosphate</name>
        <dbReference type="ChEBI" id="CHEBI:57597"/>
    </ligand>
</feature>
<feature type="binding site" evidence="1">
    <location>
        <position position="260"/>
    </location>
    <ligand>
        <name>sn-glycerol 3-phosphate</name>
        <dbReference type="ChEBI" id="CHEBI:57597"/>
    </ligand>
</feature>
<feature type="binding site" evidence="1">
    <location>
        <position position="270"/>
    </location>
    <ligand>
        <name>sn-glycerol 3-phosphate</name>
        <dbReference type="ChEBI" id="CHEBI:57597"/>
    </ligand>
</feature>
<feature type="binding site" evidence="1">
    <location>
        <position position="271"/>
    </location>
    <ligand>
        <name>NADPH</name>
        <dbReference type="ChEBI" id="CHEBI:57783"/>
    </ligand>
</feature>
<feature type="binding site" evidence="1">
    <location>
        <position position="271"/>
    </location>
    <ligand>
        <name>sn-glycerol 3-phosphate</name>
        <dbReference type="ChEBI" id="CHEBI:57597"/>
    </ligand>
</feature>
<feature type="binding site" evidence="1">
    <location>
        <position position="272"/>
    </location>
    <ligand>
        <name>sn-glycerol 3-phosphate</name>
        <dbReference type="ChEBI" id="CHEBI:57597"/>
    </ligand>
</feature>
<feature type="binding site" evidence="1">
    <location>
        <position position="297"/>
    </location>
    <ligand>
        <name>NADPH</name>
        <dbReference type="ChEBI" id="CHEBI:57783"/>
    </ligand>
</feature>
<keyword id="KW-0963">Cytoplasm</keyword>
<keyword id="KW-0444">Lipid biosynthesis</keyword>
<keyword id="KW-0443">Lipid metabolism</keyword>
<keyword id="KW-0520">NAD</keyword>
<keyword id="KW-0521">NADP</keyword>
<keyword id="KW-0547">Nucleotide-binding</keyword>
<keyword id="KW-0560">Oxidoreductase</keyword>
<keyword id="KW-0594">Phospholipid biosynthesis</keyword>
<keyword id="KW-1208">Phospholipid metabolism</keyword>
<gene>
    <name evidence="1" type="primary">gpsA</name>
    <name type="ordered locus">ACICU_02458</name>
</gene>
<proteinExistence type="inferred from homology"/>
<sequence>MAEFKFTDLVEPVAVDKKTALRITVLGGGSFGTAMANLAARNGCDTMIWIRDAETAEEINKTHINKRYLPDFTLESSLRAVSDLEQAVCDRDIILVAIPSHSFRDVLKQIAPYITAQAVVSLTKGVEAKTFSFMSDIIREELPEVPYGVLSGPNLAKEIMAGMPSGTVIASDSELVRYAVQHALHSALFRVFGSDDVHGVELGGALKNIYAVAMGIGAAYKIGENTKSMILTRALAEMSRFAVKQGANPLTFLGLSGVGDLFATCNSPLSRNYQIGYALGSGKTLEQASKELGQTAEGINTIVQVRGKAQELDVYMPITNALYEVIFEGAPPLNIALSLMKNGHRSDVEFVLPHHEV</sequence>
<dbReference type="EC" id="1.1.1.94" evidence="1"/>
<dbReference type="EMBL" id="CP000863">
    <property type="protein sequence ID" value="ACC57770.1"/>
    <property type="molecule type" value="Genomic_DNA"/>
</dbReference>
<dbReference type="RefSeq" id="WP_000807316.1">
    <property type="nucleotide sequence ID" value="NZ_CP031380.1"/>
</dbReference>
<dbReference type="SMR" id="B2HUU0"/>
<dbReference type="KEGG" id="abc:ACICU_02458"/>
<dbReference type="HOGENOM" id="CLU_033449_0_2_6"/>
<dbReference type="UniPathway" id="UPA00940"/>
<dbReference type="Proteomes" id="UP000008839">
    <property type="component" value="Chromosome"/>
</dbReference>
<dbReference type="GO" id="GO:0005829">
    <property type="term" value="C:cytosol"/>
    <property type="evidence" value="ECO:0007669"/>
    <property type="project" value="TreeGrafter"/>
</dbReference>
<dbReference type="GO" id="GO:0047952">
    <property type="term" value="F:glycerol-3-phosphate dehydrogenase [NAD(P)+] activity"/>
    <property type="evidence" value="ECO:0007669"/>
    <property type="project" value="UniProtKB-UniRule"/>
</dbReference>
<dbReference type="GO" id="GO:0051287">
    <property type="term" value="F:NAD binding"/>
    <property type="evidence" value="ECO:0007669"/>
    <property type="project" value="InterPro"/>
</dbReference>
<dbReference type="GO" id="GO:0005975">
    <property type="term" value="P:carbohydrate metabolic process"/>
    <property type="evidence" value="ECO:0007669"/>
    <property type="project" value="InterPro"/>
</dbReference>
<dbReference type="GO" id="GO:0046167">
    <property type="term" value="P:glycerol-3-phosphate biosynthetic process"/>
    <property type="evidence" value="ECO:0007669"/>
    <property type="project" value="UniProtKB-UniRule"/>
</dbReference>
<dbReference type="GO" id="GO:0046168">
    <property type="term" value="P:glycerol-3-phosphate catabolic process"/>
    <property type="evidence" value="ECO:0007669"/>
    <property type="project" value="InterPro"/>
</dbReference>
<dbReference type="GO" id="GO:0046474">
    <property type="term" value="P:glycerophospholipid biosynthetic process"/>
    <property type="evidence" value="ECO:0007669"/>
    <property type="project" value="TreeGrafter"/>
</dbReference>
<dbReference type="FunFam" id="1.10.1040.10:FF:000001">
    <property type="entry name" value="Glycerol-3-phosphate dehydrogenase [NAD(P)+]"/>
    <property type="match status" value="1"/>
</dbReference>
<dbReference type="FunFam" id="3.40.50.720:FF:000019">
    <property type="entry name" value="Glycerol-3-phosphate dehydrogenase [NAD(P)+]"/>
    <property type="match status" value="1"/>
</dbReference>
<dbReference type="Gene3D" id="1.10.1040.10">
    <property type="entry name" value="N-(1-d-carboxylethyl)-l-norvaline Dehydrogenase, domain 2"/>
    <property type="match status" value="1"/>
</dbReference>
<dbReference type="Gene3D" id="3.40.50.720">
    <property type="entry name" value="NAD(P)-binding Rossmann-like Domain"/>
    <property type="match status" value="1"/>
</dbReference>
<dbReference type="HAMAP" id="MF_00394">
    <property type="entry name" value="NAD_Glyc3P_dehydrog"/>
    <property type="match status" value="1"/>
</dbReference>
<dbReference type="InterPro" id="IPR008927">
    <property type="entry name" value="6-PGluconate_DH-like_C_sf"/>
</dbReference>
<dbReference type="InterPro" id="IPR013328">
    <property type="entry name" value="6PGD_dom2"/>
</dbReference>
<dbReference type="InterPro" id="IPR006168">
    <property type="entry name" value="G3P_DH_NAD-dep"/>
</dbReference>
<dbReference type="InterPro" id="IPR006109">
    <property type="entry name" value="G3P_DH_NAD-dep_C"/>
</dbReference>
<dbReference type="InterPro" id="IPR011128">
    <property type="entry name" value="G3P_DH_NAD-dep_N"/>
</dbReference>
<dbReference type="InterPro" id="IPR036291">
    <property type="entry name" value="NAD(P)-bd_dom_sf"/>
</dbReference>
<dbReference type="NCBIfam" id="NF000940">
    <property type="entry name" value="PRK00094.1-2"/>
    <property type="match status" value="1"/>
</dbReference>
<dbReference type="NCBIfam" id="NF000942">
    <property type="entry name" value="PRK00094.1-4"/>
    <property type="match status" value="1"/>
</dbReference>
<dbReference type="NCBIfam" id="NF000944">
    <property type="entry name" value="PRK00094.2-2"/>
    <property type="match status" value="1"/>
</dbReference>
<dbReference type="NCBIfam" id="NF000946">
    <property type="entry name" value="PRK00094.2-4"/>
    <property type="match status" value="1"/>
</dbReference>
<dbReference type="PANTHER" id="PTHR11728">
    <property type="entry name" value="GLYCEROL-3-PHOSPHATE DEHYDROGENASE"/>
    <property type="match status" value="1"/>
</dbReference>
<dbReference type="PANTHER" id="PTHR11728:SF1">
    <property type="entry name" value="GLYCEROL-3-PHOSPHATE DEHYDROGENASE [NAD(+)] 2, CHLOROPLASTIC"/>
    <property type="match status" value="1"/>
</dbReference>
<dbReference type="Pfam" id="PF07479">
    <property type="entry name" value="NAD_Gly3P_dh_C"/>
    <property type="match status" value="1"/>
</dbReference>
<dbReference type="Pfam" id="PF01210">
    <property type="entry name" value="NAD_Gly3P_dh_N"/>
    <property type="match status" value="1"/>
</dbReference>
<dbReference type="PIRSF" id="PIRSF000114">
    <property type="entry name" value="Glycerol-3-P_dh"/>
    <property type="match status" value="1"/>
</dbReference>
<dbReference type="PRINTS" id="PR00077">
    <property type="entry name" value="GPDHDRGNASE"/>
</dbReference>
<dbReference type="SUPFAM" id="SSF48179">
    <property type="entry name" value="6-phosphogluconate dehydrogenase C-terminal domain-like"/>
    <property type="match status" value="1"/>
</dbReference>
<dbReference type="SUPFAM" id="SSF51735">
    <property type="entry name" value="NAD(P)-binding Rossmann-fold domains"/>
    <property type="match status" value="1"/>
</dbReference>
<dbReference type="PROSITE" id="PS00957">
    <property type="entry name" value="NAD_G3PDH"/>
    <property type="match status" value="1"/>
</dbReference>
<accession>B2HUU0</accession>
<reference key="1">
    <citation type="journal article" date="2008" name="Antimicrob. Agents Chemother.">
        <title>Whole-genome pyrosequencing of an epidemic multidrug-resistant Acinetobacter baumannii strain belonging to the European clone II group.</title>
        <authorList>
            <person name="Iacono M."/>
            <person name="Villa L."/>
            <person name="Fortini D."/>
            <person name="Bordoni R."/>
            <person name="Imperi F."/>
            <person name="Bonnal R.J."/>
            <person name="Sicheritz-Ponten T."/>
            <person name="De Bellis G."/>
            <person name="Visca P."/>
            <person name="Cassone A."/>
            <person name="Carattoli A."/>
        </authorList>
    </citation>
    <scope>NUCLEOTIDE SEQUENCE [LARGE SCALE GENOMIC DNA]</scope>
    <source>
        <strain>ACICU</strain>
    </source>
</reference>
<protein>
    <recommendedName>
        <fullName evidence="1">Glycerol-3-phosphate dehydrogenase [NAD(P)+]</fullName>
        <ecNumber evidence="1">1.1.1.94</ecNumber>
    </recommendedName>
    <alternativeName>
        <fullName evidence="1">NAD(P)(+)-dependent glycerol-3-phosphate dehydrogenase</fullName>
    </alternativeName>
    <alternativeName>
        <fullName evidence="1">NAD(P)H-dependent dihydroxyacetone-phosphate reductase</fullName>
    </alternativeName>
</protein>
<evidence type="ECO:0000255" key="1">
    <source>
        <dbReference type="HAMAP-Rule" id="MF_00394"/>
    </source>
</evidence>
<organism>
    <name type="scientific">Acinetobacter baumannii (strain ACICU)</name>
    <dbReference type="NCBI Taxonomy" id="405416"/>
    <lineage>
        <taxon>Bacteria</taxon>
        <taxon>Pseudomonadati</taxon>
        <taxon>Pseudomonadota</taxon>
        <taxon>Gammaproteobacteria</taxon>
        <taxon>Moraxellales</taxon>
        <taxon>Moraxellaceae</taxon>
        <taxon>Acinetobacter</taxon>
        <taxon>Acinetobacter calcoaceticus/baumannii complex</taxon>
    </lineage>
</organism>
<comment type="function">
    <text evidence="1">Catalyzes the reduction of the glycolytic intermediate dihydroxyacetone phosphate (DHAP) to sn-glycerol 3-phosphate (G3P), the key precursor for phospholipid synthesis.</text>
</comment>
<comment type="catalytic activity">
    <reaction evidence="1">
        <text>sn-glycerol 3-phosphate + NAD(+) = dihydroxyacetone phosphate + NADH + H(+)</text>
        <dbReference type="Rhea" id="RHEA:11092"/>
        <dbReference type="ChEBI" id="CHEBI:15378"/>
        <dbReference type="ChEBI" id="CHEBI:57540"/>
        <dbReference type="ChEBI" id="CHEBI:57597"/>
        <dbReference type="ChEBI" id="CHEBI:57642"/>
        <dbReference type="ChEBI" id="CHEBI:57945"/>
        <dbReference type="EC" id="1.1.1.94"/>
    </reaction>
    <physiologicalReaction direction="right-to-left" evidence="1">
        <dbReference type="Rhea" id="RHEA:11094"/>
    </physiologicalReaction>
</comment>
<comment type="catalytic activity">
    <reaction evidence="1">
        <text>sn-glycerol 3-phosphate + NADP(+) = dihydroxyacetone phosphate + NADPH + H(+)</text>
        <dbReference type="Rhea" id="RHEA:11096"/>
        <dbReference type="ChEBI" id="CHEBI:15378"/>
        <dbReference type="ChEBI" id="CHEBI:57597"/>
        <dbReference type="ChEBI" id="CHEBI:57642"/>
        <dbReference type="ChEBI" id="CHEBI:57783"/>
        <dbReference type="ChEBI" id="CHEBI:58349"/>
        <dbReference type="EC" id="1.1.1.94"/>
    </reaction>
    <physiologicalReaction direction="right-to-left" evidence="1">
        <dbReference type="Rhea" id="RHEA:11098"/>
    </physiologicalReaction>
</comment>
<comment type="pathway">
    <text evidence="1">Membrane lipid metabolism; glycerophospholipid metabolism.</text>
</comment>
<comment type="subcellular location">
    <subcellularLocation>
        <location evidence="1">Cytoplasm</location>
    </subcellularLocation>
</comment>
<comment type="similarity">
    <text evidence="1">Belongs to the NAD-dependent glycerol-3-phosphate dehydrogenase family.</text>
</comment>